<evidence type="ECO:0000250" key="1"/>
<evidence type="ECO:0000250" key="2">
    <source>
        <dbReference type="UniProtKB" id="Q14C86"/>
    </source>
</evidence>
<evidence type="ECO:0000250" key="3">
    <source>
        <dbReference type="UniProtKB" id="Q6PAR5"/>
    </source>
</evidence>
<evidence type="ECO:0000255" key="4">
    <source>
        <dbReference type="PROSITE-ProRule" id="PRU00167"/>
    </source>
</evidence>
<evidence type="ECO:0000255" key="5">
    <source>
        <dbReference type="PROSITE-ProRule" id="PRU00550"/>
    </source>
</evidence>
<evidence type="ECO:0000256" key="6">
    <source>
        <dbReference type="SAM" id="MobiDB-lite"/>
    </source>
</evidence>
<evidence type="ECO:0000305" key="7"/>
<organism>
    <name type="scientific">Bos taurus</name>
    <name type="common">Bovine</name>
    <dbReference type="NCBI Taxonomy" id="9913"/>
    <lineage>
        <taxon>Eukaryota</taxon>
        <taxon>Metazoa</taxon>
        <taxon>Chordata</taxon>
        <taxon>Craniata</taxon>
        <taxon>Vertebrata</taxon>
        <taxon>Euteleostomi</taxon>
        <taxon>Mammalia</taxon>
        <taxon>Eutheria</taxon>
        <taxon>Laurasiatheria</taxon>
        <taxon>Artiodactyla</taxon>
        <taxon>Ruminantia</taxon>
        <taxon>Pecora</taxon>
        <taxon>Bovidae</taxon>
        <taxon>Bovinae</taxon>
        <taxon>Bos</taxon>
    </lineage>
</organism>
<proteinExistence type="evidence at transcript level"/>
<accession>A5D794</accession>
<keyword id="KW-0254">Endocytosis</keyword>
<keyword id="KW-0967">Endosome</keyword>
<keyword id="KW-0343">GTPase activation</keyword>
<keyword id="KW-0344">Guanine-nucleotide releasing factor</keyword>
<keyword id="KW-0472">Membrane</keyword>
<keyword id="KW-0597">Phosphoprotein</keyword>
<keyword id="KW-1185">Reference proteome</keyword>
<feature type="chain" id="PRO_0000324770" description="GTPase-activating protein and VPS9 domain-containing protein 1">
    <location>
        <begin position="1"/>
        <end position="1413"/>
    </location>
</feature>
<feature type="domain" description="Ras-GAP" evidence="4">
    <location>
        <begin position="147"/>
        <end position="385"/>
    </location>
</feature>
<feature type="domain" description="VPS9" evidence="5">
    <location>
        <begin position="1273"/>
        <end position="1413"/>
    </location>
</feature>
<feature type="region of interest" description="Disordered" evidence="6">
    <location>
        <begin position="448"/>
        <end position="474"/>
    </location>
</feature>
<feature type="region of interest" description="Disordered" evidence="6">
    <location>
        <begin position="540"/>
        <end position="587"/>
    </location>
</feature>
<feature type="region of interest" description="Disordered" evidence="6">
    <location>
        <begin position="718"/>
        <end position="799"/>
    </location>
</feature>
<feature type="region of interest" description="Disordered" evidence="6">
    <location>
        <begin position="826"/>
        <end position="852"/>
    </location>
</feature>
<feature type="region of interest" description="Disordered" evidence="6">
    <location>
        <begin position="871"/>
        <end position="957"/>
    </location>
</feature>
<feature type="region of interest" description="Disordered" evidence="6">
    <location>
        <begin position="1011"/>
        <end position="1049"/>
    </location>
</feature>
<feature type="compositionally biased region" description="Polar residues" evidence="6">
    <location>
        <begin position="451"/>
        <end position="467"/>
    </location>
</feature>
<feature type="compositionally biased region" description="Polar residues" evidence="6">
    <location>
        <begin position="737"/>
        <end position="756"/>
    </location>
</feature>
<feature type="compositionally biased region" description="Basic and acidic residues" evidence="6">
    <location>
        <begin position="757"/>
        <end position="768"/>
    </location>
</feature>
<feature type="compositionally biased region" description="Basic and acidic residues" evidence="6">
    <location>
        <begin position="871"/>
        <end position="882"/>
    </location>
</feature>
<feature type="compositionally biased region" description="Low complexity" evidence="6">
    <location>
        <begin position="883"/>
        <end position="897"/>
    </location>
</feature>
<feature type="compositionally biased region" description="Basic and acidic residues" evidence="6">
    <location>
        <begin position="934"/>
        <end position="955"/>
    </location>
</feature>
<feature type="compositionally biased region" description="Basic and acidic residues" evidence="6">
    <location>
        <begin position="1016"/>
        <end position="1026"/>
    </location>
</feature>
<feature type="site" description="Arginine finger; crucial for GTP hydrolysis by stabilizing the transition state" evidence="4">
    <location>
        <position position="172"/>
    </location>
</feature>
<feature type="modified residue" description="Phosphoserine" evidence="2">
    <location>
        <position position="227"/>
    </location>
</feature>
<feature type="modified residue" description="Phosphothreonine" evidence="2">
    <location>
        <position position="390"/>
    </location>
</feature>
<feature type="modified residue" description="Phosphothreonine" evidence="2">
    <location>
        <position position="458"/>
    </location>
</feature>
<feature type="modified residue" description="Phosphotyrosine" evidence="2">
    <location>
        <position position="460"/>
    </location>
</feature>
<feature type="modified residue" description="Phosphoserine" evidence="2">
    <location>
        <position position="466"/>
    </location>
</feature>
<feature type="modified residue" description="Phosphothreonine" evidence="2">
    <location>
        <position position="470"/>
    </location>
</feature>
<feature type="modified residue" description="Phosphoserine" evidence="3">
    <location>
        <position position="721"/>
    </location>
</feature>
<feature type="modified residue" description="Phosphoserine" evidence="2">
    <location>
        <position position="725"/>
    </location>
</feature>
<feature type="modified residue" description="Phosphoserine" evidence="2">
    <location>
        <position position="736"/>
    </location>
</feature>
<feature type="modified residue" description="Phosphothreonine" evidence="2">
    <location>
        <position position="741"/>
    </location>
</feature>
<feature type="modified residue" description="Phosphoserine" evidence="2">
    <location>
        <position position="745"/>
    </location>
</feature>
<feature type="modified residue" description="Phosphoserine" evidence="2">
    <location>
        <position position="856"/>
    </location>
</feature>
<feature type="modified residue" description="Phosphoserine" evidence="2">
    <location>
        <position position="882"/>
    </location>
</feature>
<feature type="modified residue" description="Phosphoserine" evidence="2">
    <location>
        <position position="883"/>
    </location>
</feature>
<feature type="modified residue" description="Phosphoserine" evidence="3">
    <location>
        <position position="888"/>
    </location>
</feature>
<feature type="modified residue" description="Phosphoserine" evidence="2">
    <location>
        <position position="894"/>
    </location>
</feature>
<feature type="modified residue" description="Phosphoserine" evidence="2">
    <location>
        <position position="946"/>
    </location>
</feature>
<feature type="modified residue" description="Phosphoserine" evidence="2">
    <location>
        <position position="972"/>
    </location>
</feature>
<feature type="modified residue" description="Phosphoserine" evidence="3">
    <location>
        <position position="999"/>
    </location>
</feature>
<feature type="modified residue" description="Phosphoserine" evidence="2">
    <location>
        <position position="1031"/>
    </location>
</feature>
<feature type="modified residue" description="Phosphoserine" evidence="2">
    <location>
        <position position="1038"/>
    </location>
</feature>
<protein>
    <recommendedName>
        <fullName>GTPase-activating protein and VPS9 domain-containing protein 1</fullName>
    </recommendedName>
</protein>
<gene>
    <name type="primary">GAPVD1</name>
</gene>
<reference key="1">
    <citation type="submission" date="2007-04" db="EMBL/GenBank/DDBJ databases">
        <authorList>
            <consortium name="NIH - Mammalian Gene Collection (MGC) project"/>
        </authorList>
    </citation>
    <scope>NUCLEOTIDE SEQUENCE [LARGE SCALE MRNA]</scope>
    <source>
        <strain>Hereford</strain>
        <tissue>Ascending colon</tissue>
    </source>
</reference>
<dbReference type="EMBL" id="BC140474">
    <property type="protein sequence ID" value="AAI40475.1"/>
    <property type="molecule type" value="mRNA"/>
</dbReference>
<dbReference type="RefSeq" id="NP_001095990.1">
    <property type="nucleotide sequence ID" value="NM_001102520.1"/>
</dbReference>
<dbReference type="SMR" id="A5D794"/>
<dbReference type="FunCoup" id="A5D794">
    <property type="interactions" value="5332"/>
</dbReference>
<dbReference type="STRING" id="9913.ENSBTAP00000068422"/>
<dbReference type="PaxDb" id="9913-ENSBTAP00000015341"/>
<dbReference type="GeneID" id="539646"/>
<dbReference type="KEGG" id="bta:539646"/>
<dbReference type="CTD" id="26130"/>
<dbReference type="VEuPathDB" id="HostDB:ENSBTAG00000011544"/>
<dbReference type="eggNOG" id="KOG2319">
    <property type="taxonomic scope" value="Eukaryota"/>
</dbReference>
<dbReference type="HOGENOM" id="CLU_002165_1_0_1"/>
<dbReference type="InParanoid" id="A5D794"/>
<dbReference type="OrthoDB" id="10264848at2759"/>
<dbReference type="TreeFam" id="TF105908"/>
<dbReference type="Reactome" id="R-BTA-8856828">
    <property type="pathway name" value="Clathrin-mediated endocytosis"/>
</dbReference>
<dbReference type="Reactome" id="R-BTA-8876198">
    <property type="pathway name" value="RAB GEFs exchange GTP for GDP on RABs"/>
</dbReference>
<dbReference type="Proteomes" id="UP000009136">
    <property type="component" value="Chromosome 11"/>
</dbReference>
<dbReference type="Bgee" id="ENSBTAG00000011544">
    <property type="expression patterns" value="Expressed in neutrophil and 112 other cell types or tissues"/>
</dbReference>
<dbReference type="GO" id="GO:0005829">
    <property type="term" value="C:cytosol"/>
    <property type="evidence" value="ECO:0000250"/>
    <property type="project" value="UniProtKB"/>
</dbReference>
<dbReference type="GO" id="GO:0030139">
    <property type="term" value="C:endocytic vesicle"/>
    <property type="evidence" value="ECO:0000318"/>
    <property type="project" value="GO_Central"/>
</dbReference>
<dbReference type="GO" id="GO:0005768">
    <property type="term" value="C:endosome"/>
    <property type="evidence" value="ECO:0007669"/>
    <property type="project" value="UniProtKB-SubCell"/>
</dbReference>
<dbReference type="GO" id="GO:0016020">
    <property type="term" value="C:membrane"/>
    <property type="evidence" value="ECO:0007669"/>
    <property type="project" value="UniProtKB-SubCell"/>
</dbReference>
<dbReference type="GO" id="GO:0032794">
    <property type="term" value="F:GTPase activating protein binding"/>
    <property type="evidence" value="ECO:0000250"/>
    <property type="project" value="UniProtKB"/>
</dbReference>
<dbReference type="GO" id="GO:0005096">
    <property type="term" value="F:GTPase activator activity"/>
    <property type="evidence" value="ECO:0007669"/>
    <property type="project" value="UniProtKB-KW"/>
</dbReference>
<dbReference type="GO" id="GO:0005085">
    <property type="term" value="F:guanyl-nucleotide exchange factor activity"/>
    <property type="evidence" value="ECO:0000250"/>
    <property type="project" value="UniProtKB"/>
</dbReference>
<dbReference type="GO" id="GO:0031267">
    <property type="term" value="F:small GTPase binding"/>
    <property type="evidence" value="ECO:0000318"/>
    <property type="project" value="GO_Central"/>
</dbReference>
<dbReference type="GO" id="GO:0006897">
    <property type="term" value="P:endocytosis"/>
    <property type="evidence" value="ECO:0007669"/>
    <property type="project" value="UniProtKB-KW"/>
</dbReference>
<dbReference type="GO" id="GO:0051223">
    <property type="term" value="P:regulation of protein transport"/>
    <property type="evidence" value="ECO:0000250"/>
    <property type="project" value="UniProtKB"/>
</dbReference>
<dbReference type="CDD" id="cd05129">
    <property type="entry name" value="RasGAP_RAP6"/>
    <property type="match status" value="1"/>
</dbReference>
<dbReference type="FunFam" id="1.10.246.120:FF:000001">
    <property type="entry name" value="GTPase-activating protein and VPS9 domain-containing protein 1 isoform X1"/>
    <property type="match status" value="1"/>
</dbReference>
<dbReference type="FunFam" id="1.10.506.10:FF:000009">
    <property type="entry name" value="GTPase-activating protein and VPS9 domain-containing protein 1 isoform X1"/>
    <property type="match status" value="1"/>
</dbReference>
<dbReference type="FunFam" id="1.20.1050.80:FF:000001">
    <property type="entry name" value="GTPase-activating protein and VPS9 domain-containing protein 1 isoform X1"/>
    <property type="match status" value="1"/>
</dbReference>
<dbReference type="Gene3D" id="1.10.246.120">
    <property type="match status" value="1"/>
</dbReference>
<dbReference type="Gene3D" id="1.10.506.10">
    <property type="entry name" value="GTPase Activation - p120gap, domain 1"/>
    <property type="match status" value="1"/>
</dbReference>
<dbReference type="Gene3D" id="1.20.1050.80">
    <property type="entry name" value="VPS9 domain"/>
    <property type="match status" value="1"/>
</dbReference>
<dbReference type="InterPro" id="IPR041545">
    <property type="entry name" value="DUF5601"/>
</dbReference>
<dbReference type="InterPro" id="IPR001936">
    <property type="entry name" value="RasGAP_dom"/>
</dbReference>
<dbReference type="InterPro" id="IPR008936">
    <property type="entry name" value="Rho_GTPase_activation_prot"/>
</dbReference>
<dbReference type="InterPro" id="IPR003123">
    <property type="entry name" value="VPS9"/>
</dbReference>
<dbReference type="InterPro" id="IPR045046">
    <property type="entry name" value="Vps9-like"/>
</dbReference>
<dbReference type="InterPro" id="IPR037191">
    <property type="entry name" value="VPS9_dom_sf"/>
</dbReference>
<dbReference type="PANTHER" id="PTHR23101:SF25">
    <property type="entry name" value="GTPASE-ACTIVATING PROTEIN AND VPS9 DOMAIN-CONTAINING PROTEIN 1"/>
    <property type="match status" value="1"/>
</dbReference>
<dbReference type="PANTHER" id="PTHR23101">
    <property type="entry name" value="RAB GDP/GTP EXCHANGE FACTOR"/>
    <property type="match status" value="1"/>
</dbReference>
<dbReference type="Pfam" id="PF18151">
    <property type="entry name" value="DUF5601"/>
    <property type="match status" value="1"/>
</dbReference>
<dbReference type="Pfam" id="PF00616">
    <property type="entry name" value="RasGAP"/>
    <property type="match status" value="1"/>
</dbReference>
<dbReference type="Pfam" id="PF02204">
    <property type="entry name" value="VPS9"/>
    <property type="match status" value="1"/>
</dbReference>
<dbReference type="SMART" id="SM00167">
    <property type="entry name" value="VPS9"/>
    <property type="match status" value="1"/>
</dbReference>
<dbReference type="SUPFAM" id="SSF48350">
    <property type="entry name" value="GTPase activation domain, GAP"/>
    <property type="match status" value="1"/>
</dbReference>
<dbReference type="SUPFAM" id="SSF109993">
    <property type="entry name" value="VPS9 domain"/>
    <property type="match status" value="1"/>
</dbReference>
<dbReference type="PROSITE" id="PS50018">
    <property type="entry name" value="RAS_GTPASE_ACTIV_2"/>
    <property type="match status" value="1"/>
</dbReference>
<dbReference type="PROSITE" id="PS51205">
    <property type="entry name" value="VPS9"/>
    <property type="match status" value="1"/>
</dbReference>
<sequence>MVKLDIHTLAHHLKQERLYVNSEKQLIQRLNADVLKTAEKLYRTAWIAKQQRINLDRLIITSAEASPAECCQHAKILEDTQFVDGYKQLGFQETAYGEFLSRLRENPRLIASSLVAGEKLNQENTQSVIYTVFTSLYGNCIMQEDESYLLQVLRYLIEFELKESDNPRRLLRRGTCAFSILFKLFSEGLFSAKLFLTATLHEPIMQLLVEDEDHLETDPNKLIERFSPAQQEKLFGEKGSDRFRQKVQEMVDSNEAKLVALVNKFIGYLKQNTYCFPHSLRWIVSQMYKTLSCVDRLEVGEVRAMCTDLLLACFICPAVVNPEQYGIISDAPINEVARFNLMQVGRLLQQLAMTGSEEGDPRTKSSLGKFDKSCVAAFLDVVIGGRAVETPPMSSVNLLEGLSRTVVYITYSQLITLVNFMKSVMSGDQLREDRMALDNLLANLPQAKPGKSSSLEMTPYSTPQLSPAATPANKKNRLPIATRSRSRTNVLMDLHMDHEGSAQETIQEVQPEEVLVISLGTGPQLTPGMMSENEVLNMQLSDGGQGDVPVDENKLHGPSNRSNSVSSLDLEGESVSELGAGPSGSNGVEALQLLEHEQATTQDNLDDKLRKFEIRDMMGLTDDRDISETVSETWSTDVLGSDFDPNIDEDRLQEIAGAAAENMLGSLLCLPGSGSVLLDPCTGSTISETTSEAWSVEVLPSDSEAPDLKQEERLQELESCSGLGSTSDDTDVREVSSRPSTPGLSVVSGISATSEDIPNKIEDLRSECSSDFGGKDSVTSPDMDEVTHGAHQLTSPPSQSESLLAMFDPLSSHEGGASAVVRPKVHYARPSHPPPDPPILEGAVGGNEARLPTFGSHILTPAEMEAFKQRHSYPERLVRSRSSDVVSSVRRPMSDPSWNRRPGNEERELPPAAAIGATSLVAAPHSSSSSPSKDSSRGETEERKDSDDEKSDRNRPWWRKRFVSAMPKDDPSPRLSAQAQVAEDILDKYRNAIKRTSPSEGALANYESAEVMGDGESAHDSPRDETLQNISADDLPDSASQAAHPQDSAFSYRDAKKKLRLALCSADSVAFPVLTHSTRNGLPDHTDPEDNEIVCFLKVQIAEAINLQDKNLMAQLQETMRCVCRFDNRTCRKLLASIAEDYRKRAPYIAYLTRCRQGLQTTQAHLERLLQRVLRDKEVANRYFTTVCVRLLLESKEKKIREFIQDFQKLTAADDKTAQVEDFLQFLYGAMAQDVIWQNASEEQLQDAQLAIERSVMNRIFKLAFYPNQDGDILRDQVLHEHIQRLSKVVTANHRALQIPEVYLKEAPWPSAQSEIRTISAYKTPRDKVQCILRMCSTIMNLLSLANEDSVPGADDFVPVLVFVLIKANPPCLLSTVQYISSFYASCLSGEESYWWMQFTAAVEFIKTIDDRK</sequence>
<name>GAPD1_BOVIN</name>
<comment type="function">
    <text evidence="1">Acts both as a GTPase-activating protein (GAP) and a guanine nucleotide exchange factor (GEF), and participates in various processes such as endocytosis, insulin receptor internalization or LC2A4/GLUT4 trafficking. Acts as a GEF for the Ras-related protein RAB31 by exchanging bound GDP for free GTP, leading to regulate LC2A4/GLUT4 trafficking. In the absence of insulin, it maintains RAB31 in an active state and promotes a futile cycle between LC2A4/GLUT4 storage vesicles and early endosomes, retaining LC2A4/GLUT4 inside the cells. Upon insulin stimulation, it is translocated to the plasma membrane, releasing LC2A4/GLUT4 from intracellular storage vesicles. Also involved in EGFR trafficking and degradation, possibly by promoting EGFR ubiquitination and subsequent degradation by the proteasome. Has GEF activity for Rab5 and GAP activity for Ras (By similarity).</text>
</comment>
<comment type="subunit">
    <text evidence="1">Interacts with TRIP10/CIP4. Interacts with RAB5A (By similarity).</text>
</comment>
<comment type="subcellular location">
    <subcellularLocation>
        <location evidence="1">Membrane</location>
        <topology evidence="1">Peripheral membrane protein</topology>
    </subcellularLocation>
    <subcellularLocation>
        <location evidence="1">Endosome</location>
    </subcellularLocation>
    <text evidence="1">Recruited to the plasma membrane by TRIP10/CIP4 in response to insulin.</text>
</comment>
<comment type="similarity">
    <text evidence="7">Belongs to the GAPVD1 family.</text>
</comment>